<evidence type="ECO:0000255" key="1">
    <source>
        <dbReference type="HAMAP-Rule" id="MF_01013"/>
    </source>
</evidence>
<feature type="chain" id="PRO_1000063141" description="Imidazole glycerol phosphate synthase subunit HisF">
    <location>
        <begin position="1"/>
        <end position="259"/>
    </location>
</feature>
<feature type="active site" evidence="1">
    <location>
        <position position="11"/>
    </location>
</feature>
<feature type="active site" evidence="1">
    <location>
        <position position="130"/>
    </location>
</feature>
<accession>A1S6Z6</accession>
<name>HIS6_SHEAM</name>
<proteinExistence type="inferred from homology"/>
<sequence length="259" mass="28178">MLAKRIVPCLDVKDGKVVKGVQFRNHEIVGDIVPLAARYAQEGADELVFYDISASAKGAIVDKSWVSRIAERIDIPFCVAGGIKTAEQAREILAFGADKISINSPALSDPSLIRRLHDEFGRQCVVVGIDSFYDAGSGNYTVKQFTGDEAATKDTRWHTLDWVEEVQRQGCGEIVLNVMNQDGVRQGYDIEQLLKVRAICDVPLIASGGAGTMAHFAEVFTDARVDAALAASVFHKGIINIGELKQFLVSQGIAIRLTE</sequence>
<organism>
    <name type="scientific">Shewanella amazonensis (strain ATCC BAA-1098 / SB2B)</name>
    <dbReference type="NCBI Taxonomy" id="326297"/>
    <lineage>
        <taxon>Bacteria</taxon>
        <taxon>Pseudomonadati</taxon>
        <taxon>Pseudomonadota</taxon>
        <taxon>Gammaproteobacteria</taxon>
        <taxon>Alteromonadales</taxon>
        <taxon>Shewanellaceae</taxon>
        <taxon>Shewanella</taxon>
    </lineage>
</organism>
<gene>
    <name evidence="1" type="primary">hisF</name>
    <name type="ordered locus">Sama_1947</name>
</gene>
<comment type="function">
    <text evidence="1">IGPS catalyzes the conversion of PRFAR and glutamine to IGP, AICAR and glutamate. The HisF subunit catalyzes the cyclization activity that produces IGP and AICAR from PRFAR using the ammonia provided by the HisH subunit.</text>
</comment>
<comment type="catalytic activity">
    <reaction evidence="1">
        <text>5-[(5-phospho-1-deoxy-D-ribulos-1-ylimino)methylamino]-1-(5-phospho-beta-D-ribosyl)imidazole-4-carboxamide + L-glutamine = D-erythro-1-(imidazol-4-yl)glycerol 3-phosphate + 5-amino-1-(5-phospho-beta-D-ribosyl)imidazole-4-carboxamide + L-glutamate + H(+)</text>
        <dbReference type="Rhea" id="RHEA:24793"/>
        <dbReference type="ChEBI" id="CHEBI:15378"/>
        <dbReference type="ChEBI" id="CHEBI:29985"/>
        <dbReference type="ChEBI" id="CHEBI:58278"/>
        <dbReference type="ChEBI" id="CHEBI:58359"/>
        <dbReference type="ChEBI" id="CHEBI:58475"/>
        <dbReference type="ChEBI" id="CHEBI:58525"/>
        <dbReference type="EC" id="4.3.2.10"/>
    </reaction>
</comment>
<comment type="pathway">
    <text evidence="1">Amino-acid biosynthesis; L-histidine biosynthesis; L-histidine from 5-phospho-alpha-D-ribose 1-diphosphate: step 5/9.</text>
</comment>
<comment type="subunit">
    <text evidence="1">Heterodimer of HisH and HisF.</text>
</comment>
<comment type="subcellular location">
    <subcellularLocation>
        <location evidence="1">Cytoplasm</location>
    </subcellularLocation>
</comment>
<comment type="similarity">
    <text evidence="1">Belongs to the HisA/HisF family.</text>
</comment>
<dbReference type="EC" id="4.3.2.10" evidence="1"/>
<dbReference type="EMBL" id="CP000507">
    <property type="protein sequence ID" value="ABM00153.1"/>
    <property type="molecule type" value="Genomic_DNA"/>
</dbReference>
<dbReference type="RefSeq" id="WP_011760060.1">
    <property type="nucleotide sequence ID" value="NC_008700.1"/>
</dbReference>
<dbReference type="SMR" id="A1S6Z6"/>
<dbReference type="STRING" id="326297.Sama_1947"/>
<dbReference type="KEGG" id="saz:Sama_1947"/>
<dbReference type="eggNOG" id="COG0107">
    <property type="taxonomic scope" value="Bacteria"/>
</dbReference>
<dbReference type="HOGENOM" id="CLU_048577_4_0_6"/>
<dbReference type="OrthoDB" id="9781903at2"/>
<dbReference type="UniPathway" id="UPA00031">
    <property type="reaction ID" value="UER00010"/>
</dbReference>
<dbReference type="Proteomes" id="UP000009175">
    <property type="component" value="Chromosome"/>
</dbReference>
<dbReference type="GO" id="GO:0005737">
    <property type="term" value="C:cytoplasm"/>
    <property type="evidence" value="ECO:0007669"/>
    <property type="project" value="UniProtKB-SubCell"/>
</dbReference>
<dbReference type="GO" id="GO:0000107">
    <property type="term" value="F:imidazoleglycerol-phosphate synthase activity"/>
    <property type="evidence" value="ECO:0007669"/>
    <property type="project" value="UniProtKB-UniRule"/>
</dbReference>
<dbReference type="GO" id="GO:0016829">
    <property type="term" value="F:lyase activity"/>
    <property type="evidence" value="ECO:0007669"/>
    <property type="project" value="UniProtKB-KW"/>
</dbReference>
<dbReference type="GO" id="GO:0000105">
    <property type="term" value="P:L-histidine biosynthetic process"/>
    <property type="evidence" value="ECO:0007669"/>
    <property type="project" value="UniProtKB-UniRule"/>
</dbReference>
<dbReference type="CDD" id="cd04731">
    <property type="entry name" value="HisF"/>
    <property type="match status" value="1"/>
</dbReference>
<dbReference type="FunFam" id="3.20.20.70:FF:000006">
    <property type="entry name" value="Imidazole glycerol phosphate synthase subunit HisF"/>
    <property type="match status" value="1"/>
</dbReference>
<dbReference type="Gene3D" id="3.20.20.70">
    <property type="entry name" value="Aldolase class I"/>
    <property type="match status" value="1"/>
</dbReference>
<dbReference type="HAMAP" id="MF_01013">
    <property type="entry name" value="HisF"/>
    <property type="match status" value="1"/>
</dbReference>
<dbReference type="InterPro" id="IPR013785">
    <property type="entry name" value="Aldolase_TIM"/>
</dbReference>
<dbReference type="InterPro" id="IPR006062">
    <property type="entry name" value="His_biosynth"/>
</dbReference>
<dbReference type="InterPro" id="IPR004651">
    <property type="entry name" value="HisF"/>
</dbReference>
<dbReference type="InterPro" id="IPR050064">
    <property type="entry name" value="IGPS_HisA/HisF"/>
</dbReference>
<dbReference type="InterPro" id="IPR011060">
    <property type="entry name" value="RibuloseP-bd_barrel"/>
</dbReference>
<dbReference type="NCBIfam" id="TIGR00735">
    <property type="entry name" value="hisF"/>
    <property type="match status" value="1"/>
</dbReference>
<dbReference type="PANTHER" id="PTHR21235:SF2">
    <property type="entry name" value="IMIDAZOLE GLYCEROL PHOSPHATE SYNTHASE HISHF"/>
    <property type="match status" value="1"/>
</dbReference>
<dbReference type="PANTHER" id="PTHR21235">
    <property type="entry name" value="IMIDAZOLE GLYCEROL PHOSPHATE SYNTHASE SUBUNIT HISF/H IGP SYNTHASE SUBUNIT HISF/H"/>
    <property type="match status" value="1"/>
</dbReference>
<dbReference type="Pfam" id="PF00977">
    <property type="entry name" value="His_biosynth"/>
    <property type="match status" value="1"/>
</dbReference>
<dbReference type="SUPFAM" id="SSF51366">
    <property type="entry name" value="Ribulose-phoshate binding barrel"/>
    <property type="match status" value="1"/>
</dbReference>
<reference key="1">
    <citation type="submission" date="2006-12" db="EMBL/GenBank/DDBJ databases">
        <title>Complete sequence of Shewanella amazonensis SB2B.</title>
        <authorList>
            <consortium name="US DOE Joint Genome Institute"/>
            <person name="Copeland A."/>
            <person name="Lucas S."/>
            <person name="Lapidus A."/>
            <person name="Barry K."/>
            <person name="Detter J.C."/>
            <person name="Glavina del Rio T."/>
            <person name="Hammon N."/>
            <person name="Israni S."/>
            <person name="Dalin E."/>
            <person name="Tice H."/>
            <person name="Pitluck S."/>
            <person name="Munk A.C."/>
            <person name="Brettin T."/>
            <person name="Bruce D."/>
            <person name="Han C."/>
            <person name="Tapia R."/>
            <person name="Gilna P."/>
            <person name="Schmutz J."/>
            <person name="Larimer F."/>
            <person name="Land M."/>
            <person name="Hauser L."/>
            <person name="Kyrpides N."/>
            <person name="Mikhailova N."/>
            <person name="Fredrickson J."/>
            <person name="Richardson P."/>
        </authorList>
    </citation>
    <scope>NUCLEOTIDE SEQUENCE [LARGE SCALE GENOMIC DNA]</scope>
    <source>
        <strain>ATCC BAA-1098 / SB2B</strain>
    </source>
</reference>
<keyword id="KW-0028">Amino-acid biosynthesis</keyword>
<keyword id="KW-0963">Cytoplasm</keyword>
<keyword id="KW-0368">Histidine biosynthesis</keyword>
<keyword id="KW-0456">Lyase</keyword>
<keyword id="KW-1185">Reference proteome</keyword>
<protein>
    <recommendedName>
        <fullName evidence="1">Imidazole glycerol phosphate synthase subunit HisF</fullName>
        <ecNumber evidence="1">4.3.2.10</ecNumber>
    </recommendedName>
    <alternativeName>
        <fullName evidence="1">IGP synthase cyclase subunit</fullName>
    </alternativeName>
    <alternativeName>
        <fullName evidence="1">IGP synthase subunit HisF</fullName>
    </alternativeName>
    <alternativeName>
        <fullName evidence="1">ImGP synthase subunit HisF</fullName>
        <shortName evidence="1">IGPS subunit HisF</shortName>
    </alternativeName>
</protein>